<comment type="function">
    <text evidence="1">Catalyzes the cleavage of L-kynurenine (L-Kyn) and L-3-hydroxykynurenine (L-3OHKyn) into anthranilic acid (AA) and 3-hydroxyanthranilic acid (3-OHAA), respectively.</text>
</comment>
<comment type="catalytic activity">
    <reaction evidence="1">
        <text>L-kynurenine + H2O = anthranilate + L-alanine + H(+)</text>
        <dbReference type="Rhea" id="RHEA:16813"/>
        <dbReference type="ChEBI" id="CHEBI:15377"/>
        <dbReference type="ChEBI" id="CHEBI:15378"/>
        <dbReference type="ChEBI" id="CHEBI:16567"/>
        <dbReference type="ChEBI" id="CHEBI:57959"/>
        <dbReference type="ChEBI" id="CHEBI:57972"/>
        <dbReference type="EC" id="3.7.1.3"/>
    </reaction>
</comment>
<comment type="catalytic activity">
    <reaction evidence="1">
        <text>3-hydroxy-L-kynurenine + H2O = 3-hydroxyanthranilate + L-alanine + H(+)</text>
        <dbReference type="Rhea" id="RHEA:25143"/>
        <dbReference type="ChEBI" id="CHEBI:15377"/>
        <dbReference type="ChEBI" id="CHEBI:15378"/>
        <dbReference type="ChEBI" id="CHEBI:36559"/>
        <dbReference type="ChEBI" id="CHEBI:57972"/>
        <dbReference type="ChEBI" id="CHEBI:58125"/>
        <dbReference type="EC" id="3.7.1.3"/>
    </reaction>
</comment>
<comment type="cofactor">
    <cofactor evidence="1">
        <name>pyridoxal 5'-phosphate</name>
        <dbReference type="ChEBI" id="CHEBI:597326"/>
    </cofactor>
</comment>
<comment type="pathway">
    <text evidence="1">Amino-acid degradation; L-kynurenine degradation; L-alanine and anthranilate from L-kynurenine: step 1/1.</text>
</comment>
<comment type="pathway">
    <text evidence="1">Cofactor biosynthesis; NAD(+) biosynthesis; quinolinate from L-kynurenine: step 2/3.</text>
</comment>
<comment type="subunit">
    <text evidence="1">Homodimer.</text>
</comment>
<comment type="similarity">
    <text evidence="1">Belongs to the kynureninase family.</text>
</comment>
<accession>Q5WKB5</accession>
<feature type="chain" id="PRO_0000356993" description="Kynureninase">
    <location>
        <begin position="1"/>
        <end position="427"/>
    </location>
</feature>
<feature type="binding site" evidence="1">
    <location>
        <position position="104"/>
    </location>
    <ligand>
        <name>pyridoxal 5'-phosphate</name>
        <dbReference type="ChEBI" id="CHEBI:597326"/>
    </ligand>
</feature>
<feature type="binding site" evidence="1">
    <location>
        <position position="105"/>
    </location>
    <ligand>
        <name>pyridoxal 5'-phosphate</name>
        <dbReference type="ChEBI" id="CHEBI:597326"/>
    </ligand>
</feature>
<feature type="binding site" evidence="1">
    <location>
        <begin position="132"/>
        <end position="135"/>
    </location>
    <ligand>
        <name>pyridoxal 5'-phosphate</name>
        <dbReference type="ChEBI" id="CHEBI:597326"/>
    </ligand>
</feature>
<feature type="binding site" evidence="1">
    <location>
        <position position="213"/>
    </location>
    <ligand>
        <name>pyridoxal 5'-phosphate</name>
        <dbReference type="ChEBI" id="CHEBI:597326"/>
    </ligand>
</feature>
<feature type="binding site" evidence="1">
    <location>
        <position position="216"/>
    </location>
    <ligand>
        <name>pyridoxal 5'-phosphate</name>
        <dbReference type="ChEBI" id="CHEBI:597326"/>
    </ligand>
</feature>
<feature type="binding site" evidence="1">
    <location>
        <position position="238"/>
    </location>
    <ligand>
        <name>pyridoxal 5'-phosphate</name>
        <dbReference type="ChEBI" id="CHEBI:597326"/>
    </ligand>
</feature>
<feature type="binding site" evidence="1">
    <location>
        <position position="267"/>
    </location>
    <ligand>
        <name>pyridoxal 5'-phosphate</name>
        <dbReference type="ChEBI" id="CHEBI:597326"/>
    </ligand>
</feature>
<feature type="binding site" evidence="1">
    <location>
        <position position="295"/>
    </location>
    <ligand>
        <name>pyridoxal 5'-phosphate</name>
        <dbReference type="ChEBI" id="CHEBI:597326"/>
    </ligand>
</feature>
<feature type="modified residue" description="N6-(pyridoxal phosphate)lysine" evidence="1">
    <location>
        <position position="239"/>
    </location>
</feature>
<organism>
    <name type="scientific">Shouchella clausii (strain KSM-K16)</name>
    <name type="common">Alkalihalobacillus clausii</name>
    <dbReference type="NCBI Taxonomy" id="66692"/>
    <lineage>
        <taxon>Bacteria</taxon>
        <taxon>Bacillati</taxon>
        <taxon>Bacillota</taxon>
        <taxon>Bacilli</taxon>
        <taxon>Bacillales</taxon>
        <taxon>Bacillaceae</taxon>
        <taxon>Shouchella</taxon>
    </lineage>
</organism>
<reference key="1">
    <citation type="submission" date="2003-10" db="EMBL/GenBank/DDBJ databases">
        <title>The complete genome sequence of the alkaliphilic Bacillus clausii KSM-K16.</title>
        <authorList>
            <person name="Takaki Y."/>
            <person name="Kageyama Y."/>
            <person name="Shimamura S."/>
            <person name="Suzuki H."/>
            <person name="Nishi S."/>
            <person name="Hatada Y."/>
            <person name="Kawai S."/>
            <person name="Ito S."/>
            <person name="Horikoshi K."/>
        </authorList>
    </citation>
    <scope>NUCLEOTIDE SEQUENCE [LARGE SCALE GENOMIC DNA]</scope>
    <source>
        <strain>KSM-K16</strain>
    </source>
</reference>
<name>KYNU_SHOC1</name>
<sequence length="427" mass="48667">MPCFDSVYTKEYAQQLDAVDPLARFRNEFYIDEDSIYLDGNSLGLLSTRAEQSLLDVLDSWKQYGIDGWTKGKHPWFYLSESLGEKMASLVGAKAEEVIVTGSTTTNLHQLVSSFFRPEGKKTKILADELNFPSDIYALKSQLHLQGFDPEEHLIQVKSDNGHLLNEEDIIAEMKEDIALIVLPSVLYRSGQILDMERLTTAAHQRNILIGFDLCHSIGAIPHQLRKWDVDFAFWCTYKHVNGGPGSVAALFVNEKHFGRRPGLAGWFSSNKQKQFDMEHTLTPAEHAGAFQIGTPHIFSIAPLIGSLAIFAEAGIEQIRKKSLKLTDYMMTLIEHELSDYQFTIQNPRDERRGAHLYIEHDEAARICKALKEENVIPDFRSPKGIRLAPVALYNTFKEVWNTIQVLKFIMKEERYKKFKNERDVVA</sequence>
<protein>
    <recommendedName>
        <fullName evidence="1">Kynureninase</fullName>
        <ecNumber evidence="1">3.7.1.3</ecNumber>
    </recommendedName>
    <alternativeName>
        <fullName evidence="1">L-kynurenine hydrolase</fullName>
    </alternativeName>
</protein>
<proteinExistence type="inferred from homology"/>
<evidence type="ECO:0000255" key="1">
    <source>
        <dbReference type="HAMAP-Rule" id="MF_01970"/>
    </source>
</evidence>
<keyword id="KW-0378">Hydrolase</keyword>
<keyword id="KW-0662">Pyridine nucleotide biosynthesis</keyword>
<keyword id="KW-0663">Pyridoxal phosphate</keyword>
<keyword id="KW-1185">Reference proteome</keyword>
<gene>
    <name evidence="1" type="primary">kynU</name>
    <name type="ordered locus">ABC0651</name>
</gene>
<dbReference type="EC" id="3.7.1.3" evidence="1"/>
<dbReference type="EMBL" id="AP006627">
    <property type="protein sequence ID" value="BAD63190.1"/>
    <property type="molecule type" value="Genomic_DNA"/>
</dbReference>
<dbReference type="RefSeq" id="WP_011245506.1">
    <property type="nucleotide sequence ID" value="NC_006582.1"/>
</dbReference>
<dbReference type="SMR" id="Q5WKB5"/>
<dbReference type="STRING" id="66692.ABC0651"/>
<dbReference type="KEGG" id="bcl:ABC0651"/>
<dbReference type="eggNOG" id="COG3844">
    <property type="taxonomic scope" value="Bacteria"/>
</dbReference>
<dbReference type="HOGENOM" id="CLU_003433_4_0_9"/>
<dbReference type="OrthoDB" id="9812626at2"/>
<dbReference type="UniPathway" id="UPA00253">
    <property type="reaction ID" value="UER00329"/>
</dbReference>
<dbReference type="UniPathway" id="UPA00334">
    <property type="reaction ID" value="UER00455"/>
</dbReference>
<dbReference type="Proteomes" id="UP000001168">
    <property type="component" value="Chromosome"/>
</dbReference>
<dbReference type="GO" id="GO:0005737">
    <property type="term" value="C:cytoplasm"/>
    <property type="evidence" value="ECO:0007669"/>
    <property type="project" value="InterPro"/>
</dbReference>
<dbReference type="GO" id="GO:0030429">
    <property type="term" value="F:kynureninase activity"/>
    <property type="evidence" value="ECO:0007669"/>
    <property type="project" value="UniProtKB-UniRule"/>
</dbReference>
<dbReference type="GO" id="GO:0030170">
    <property type="term" value="F:pyridoxal phosphate binding"/>
    <property type="evidence" value="ECO:0007669"/>
    <property type="project" value="UniProtKB-UniRule"/>
</dbReference>
<dbReference type="GO" id="GO:0043420">
    <property type="term" value="P:anthranilate metabolic process"/>
    <property type="evidence" value="ECO:0007669"/>
    <property type="project" value="TreeGrafter"/>
</dbReference>
<dbReference type="GO" id="GO:0097053">
    <property type="term" value="P:L-kynurenine catabolic process"/>
    <property type="evidence" value="ECO:0007669"/>
    <property type="project" value="UniProtKB-UniRule"/>
</dbReference>
<dbReference type="GO" id="GO:0019441">
    <property type="term" value="P:L-tryptophan catabolic process to kynurenine"/>
    <property type="evidence" value="ECO:0007669"/>
    <property type="project" value="TreeGrafter"/>
</dbReference>
<dbReference type="GO" id="GO:0009435">
    <property type="term" value="P:NAD biosynthetic process"/>
    <property type="evidence" value="ECO:0007669"/>
    <property type="project" value="UniProtKB-UniPathway"/>
</dbReference>
<dbReference type="GO" id="GO:0019805">
    <property type="term" value="P:quinolinate biosynthetic process"/>
    <property type="evidence" value="ECO:0007669"/>
    <property type="project" value="UniProtKB-UniRule"/>
</dbReference>
<dbReference type="Gene3D" id="3.90.1150.10">
    <property type="entry name" value="Aspartate Aminotransferase, domain 1"/>
    <property type="match status" value="1"/>
</dbReference>
<dbReference type="Gene3D" id="3.40.640.10">
    <property type="entry name" value="Type I PLP-dependent aspartate aminotransferase-like (Major domain)"/>
    <property type="match status" value="1"/>
</dbReference>
<dbReference type="HAMAP" id="MF_01970">
    <property type="entry name" value="Kynureninase"/>
    <property type="match status" value="1"/>
</dbReference>
<dbReference type="InterPro" id="IPR010111">
    <property type="entry name" value="Kynureninase"/>
</dbReference>
<dbReference type="InterPro" id="IPR015424">
    <property type="entry name" value="PyrdxlP-dep_Trfase"/>
</dbReference>
<dbReference type="InterPro" id="IPR015421">
    <property type="entry name" value="PyrdxlP-dep_Trfase_major"/>
</dbReference>
<dbReference type="InterPro" id="IPR015422">
    <property type="entry name" value="PyrdxlP-dep_Trfase_small"/>
</dbReference>
<dbReference type="NCBIfam" id="TIGR01814">
    <property type="entry name" value="kynureninase"/>
    <property type="match status" value="1"/>
</dbReference>
<dbReference type="PANTHER" id="PTHR14084">
    <property type="entry name" value="KYNURENINASE"/>
    <property type="match status" value="1"/>
</dbReference>
<dbReference type="PANTHER" id="PTHR14084:SF0">
    <property type="entry name" value="KYNURENINASE"/>
    <property type="match status" value="1"/>
</dbReference>
<dbReference type="Pfam" id="PF22580">
    <property type="entry name" value="KYNU_C"/>
    <property type="match status" value="1"/>
</dbReference>
<dbReference type="PIRSF" id="PIRSF038800">
    <property type="entry name" value="KYNU"/>
    <property type="match status" value="1"/>
</dbReference>
<dbReference type="SUPFAM" id="SSF53383">
    <property type="entry name" value="PLP-dependent transferases"/>
    <property type="match status" value="1"/>
</dbReference>